<organism>
    <name type="scientific">Chloroherpeton thalassium (strain ATCC 35110 / GB-78)</name>
    <dbReference type="NCBI Taxonomy" id="517418"/>
    <lineage>
        <taxon>Bacteria</taxon>
        <taxon>Pseudomonadati</taxon>
        <taxon>Chlorobiota</taxon>
        <taxon>Chlorobiia</taxon>
        <taxon>Chlorobiales</taxon>
        <taxon>Chloroherpetonaceae</taxon>
        <taxon>Chloroherpeton</taxon>
    </lineage>
</organism>
<reference key="1">
    <citation type="submission" date="2008-06" db="EMBL/GenBank/DDBJ databases">
        <title>Complete sequence of Chloroherpeton thalassium ATCC 35110.</title>
        <authorList>
            <consortium name="US DOE Joint Genome Institute"/>
            <person name="Lucas S."/>
            <person name="Copeland A."/>
            <person name="Lapidus A."/>
            <person name="Glavina del Rio T."/>
            <person name="Dalin E."/>
            <person name="Tice H."/>
            <person name="Bruce D."/>
            <person name="Goodwin L."/>
            <person name="Pitluck S."/>
            <person name="Schmutz J."/>
            <person name="Larimer F."/>
            <person name="Land M."/>
            <person name="Hauser L."/>
            <person name="Kyrpides N."/>
            <person name="Mikhailova N."/>
            <person name="Liu Z."/>
            <person name="Li T."/>
            <person name="Zhao F."/>
            <person name="Overmann J."/>
            <person name="Bryant D.A."/>
            <person name="Richardson P."/>
        </authorList>
    </citation>
    <scope>NUCLEOTIDE SEQUENCE [LARGE SCALE GENOMIC DNA]</scope>
    <source>
        <strain>ATCC 35110 / GB-78</strain>
    </source>
</reference>
<accession>B3QYL5</accession>
<protein>
    <recommendedName>
        <fullName evidence="1">DNA-directed RNA polymerase subunit beta'</fullName>
        <shortName evidence="1">RNAP subunit beta'</shortName>
        <ecNumber evidence="1">2.7.7.6</ecNumber>
    </recommendedName>
    <alternativeName>
        <fullName evidence="1">RNA polymerase subunit beta'</fullName>
    </alternativeName>
    <alternativeName>
        <fullName evidence="1">Transcriptase subunit beta'</fullName>
    </alternativeName>
</protein>
<keyword id="KW-0240">DNA-directed RNA polymerase</keyword>
<keyword id="KW-0460">Magnesium</keyword>
<keyword id="KW-0479">Metal-binding</keyword>
<keyword id="KW-0548">Nucleotidyltransferase</keyword>
<keyword id="KW-1185">Reference proteome</keyword>
<keyword id="KW-0804">Transcription</keyword>
<keyword id="KW-0808">Transferase</keyword>
<keyword id="KW-0862">Zinc</keyword>
<sequence>MAFAIGTSPIKRDFTRIKISVASPESILARSRGEVLKPETINYRTYKPERDGLMCEKIFGPTKDWECYCGKYKRVRYKGIICDRCGVEVTSKSVRRERMGHISLAVPVVHTWFFRSVPSKIGALLDLSTKELERIIYYEVFVVINPGEPGRKQGLKMMDRLTEEQYYQIITEYEDNQDLDDDDPDKFVAKMGGEAIKALLKRLDLDSTAKELRRILKESQSEQKKADALKRLKVVEAFRASYEPYSKEAKKKEEFSLEPPEPYRYEGNKPEYMVMEVIPVIPPELRPLVPLEGGRFATSDLNDLYRRVIIRNNRLKKLLDIRAPEVILRNEKRMLQEAVDALFDNSRKANAVKSGDSNRALKSLSDSLKGKQGRFRQNLLGKRVDYSGRSVIVVGPELRLHQCGLPKDMAIELFQPFVIRRLVERGYAKSVKSAKKLIDRKDPAIWDVLEKVIEGHPIMLNRAPTLHRLGIQAFQPVLVEGKALQLHPLVCTAFNADFDGDQMAVHIPLSQEAQMEAMMLMLSSHNLILPQSGKPVTVPSQDMVLGVYYLTKVRKGARGEGNIFANTEDVVIAYNEGEVDLHARIFVRYDKPRDEKNDVLSFIDAIPESKPEKRKWVKEQLEAKTLMATTVGRVLFSQVMPETISFINKVLDKKTAKDLIAHVISKVGTVRAEKFLDDVKGLGFNMAMRGGLSIGLSDAIVPETKKRYIKEAIKNSNKIIKEYNTGMLTENEKYNKIVDVWQNVTNIVSDESYQTLRKDRDGFNPLFMMLDSGARGSRNQARQLTGMRGLIARPQKSMSGQPGEIIENPIISNLREGLTVLEYFISTHGARKGLSDTSLKTADAGYLTRRLHDVAQDVIVTEDDCGTTMGIHIRRDEEEVAGKVKFHDKLRGRYVAHDVVDSITEQVVLKAGDLITDEIAEELRLNVGVTDVMIRSVLTCDSKRGICAKCYGTNLASGRQVDAGEAVGVIAAQSIGEPGTQLTLRTFHQGGAAQGGIAETEIRSQYEGQLEFENIQMVQSKTFNEDGAEEVHDIVIRKNGVMNIVDPSTGKILKRMIVPYGAKMNCKDGDMVQKGSLLYGVEPNSTPILAEKDGVIKFVDIEKGVTYKEESDQQTGHVQRVIINWRSRVRTVDIREPRIQLLTHHGELIASYPIPIKANLHSEDGATVHAGDVLAKVPRDLTRIGGDITAGLPRVTELFEARNPSDPAVVSEIDGIVTFGSQRRNNKEVKVKNAYDDERIYLVPIGKHILVNEGDEVRAGDPITDGSISPQDILRIQGPNAVQQYLVNEIQKVYQINAGVEINDKHLEVIVRQMLQKVQVEDSGDTHLMPGDLIDKTTFKDVNSKIQGKVRVSEKGDARNIQEGELYAKEEIGRLNRELRKNNRVLVTFEPAVPATSRPVLLGITSAALQTESFISAASFQETTKVLTDAAVEGKTDFLAGLKENVIVGKLIPAGTGLKRYRSLRISTANLQDSYEPSQRAYQEDEYAKKEDGEIAIDD</sequence>
<proteinExistence type="inferred from homology"/>
<gene>
    <name evidence="1" type="primary">rpoC</name>
    <name type="ordered locus">Ctha_1179</name>
</gene>
<feature type="chain" id="PRO_0000353325" description="DNA-directed RNA polymerase subunit beta'">
    <location>
        <begin position="1"/>
        <end position="1499"/>
    </location>
</feature>
<feature type="region of interest" description="Disordered" evidence="2">
    <location>
        <begin position="1475"/>
        <end position="1499"/>
    </location>
</feature>
<feature type="compositionally biased region" description="Basic and acidic residues" evidence="2">
    <location>
        <begin position="1482"/>
        <end position="1493"/>
    </location>
</feature>
<feature type="binding site" evidence="1">
    <location>
        <position position="67"/>
    </location>
    <ligand>
        <name>Zn(2+)</name>
        <dbReference type="ChEBI" id="CHEBI:29105"/>
        <label>1</label>
    </ligand>
</feature>
<feature type="binding site" evidence="1">
    <location>
        <position position="69"/>
    </location>
    <ligand>
        <name>Zn(2+)</name>
        <dbReference type="ChEBI" id="CHEBI:29105"/>
        <label>1</label>
    </ligand>
</feature>
<feature type="binding site" evidence="1">
    <location>
        <position position="82"/>
    </location>
    <ligand>
        <name>Zn(2+)</name>
        <dbReference type="ChEBI" id="CHEBI:29105"/>
        <label>1</label>
    </ligand>
</feature>
<feature type="binding site" evidence="1">
    <location>
        <position position="85"/>
    </location>
    <ligand>
        <name>Zn(2+)</name>
        <dbReference type="ChEBI" id="CHEBI:29105"/>
        <label>1</label>
    </ligand>
</feature>
<feature type="binding site" evidence="1">
    <location>
        <position position="497"/>
    </location>
    <ligand>
        <name>Mg(2+)</name>
        <dbReference type="ChEBI" id="CHEBI:18420"/>
    </ligand>
</feature>
<feature type="binding site" evidence="1">
    <location>
        <position position="499"/>
    </location>
    <ligand>
        <name>Mg(2+)</name>
        <dbReference type="ChEBI" id="CHEBI:18420"/>
    </ligand>
</feature>
<feature type="binding site" evidence="1">
    <location>
        <position position="501"/>
    </location>
    <ligand>
        <name>Mg(2+)</name>
        <dbReference type="ChEBI" id="CHEBI:18420"/>
    </ligand>
</feature>
<feature type="binding site" evidence="1">
    <location>
        <position position="865"/>
    </location>
    <ligand>
        <name>Zn(2+)</name>
        <dbReference type="ChEBI" id="CHEBI:29105"/>
        <label>2</label>
    </ligand>
</feature>
<feature type="binding site" evidence="1">
    <location>
        <position position="940"/>
    </location>
    <ligand>
        <name>Zn(2+)</name>
        <dbReference type="ChEBI" id="CHEBI:29105"/>
        <label>2</label>
    </ligand>
</feature>
<feature type="binding site" evidence="1">
    <location>
        <position position="947"/>
    </location>
    <ligand>
        <name>Zn(2+)</name>
        <dbReference type="ChEBI" id="CHEBI:29105"/>
        <label>2</label>
    </ligand>
</feature>
<feature type="binding site" evidence="1">
    <location>
        <position position="950"/>
    </location>
    <ligand>
        <name>Zn(2+)</name>
        <dbReference type="ChEBI" id="CHEBI:29105"/>
        <label>2</label>
    </ligand>
</feature>
<name>RPOC_CHLT3</name>
<comment type="function">
    <text evidence="1">DNA-dependent RNA polymerase catalyzes the transcription of DNA into RNA using the four ribonucleoside triphosphates as substrates.</text>
</comment>
<comment type="catalytic activity">
    <reaction evidence="1">
        <text>RNA(n) + a ribonucleoside 5'-triphosphate = RNA(n+1) + diphosphate</text>
        <dbReference type="Rhea" id="RHEA:21248"/>
        <dbReference type="Rhea" id="RHEA-COMP:14527"/>
        <dbReference type="Rhea" id="RHEA-COMP:17342"/>
        <dbReference type="ChEBI" id="CHEBI:33019"/>
        <dbReference type="ChEBI" id="CHEBI:61557"/>
        <dbReference type="ChEBI" id="CHEBI:140395"/>
        <dbReference type="EC" id="2.7.7.6"/>
    </reaction>
</comment>
<comment type="cofactor">
    <cofactor evidence="1">
        <name>Mg(2+)</name>
        <dbReference type="ChEBI" id="CHEBI:18420"/>
    </cofactor>
    <text evidence="1">Binds 1 Mg(2+) ion per subunit.</text>
</comment>
<comment type="cofactor">
    <cofactor evidence="1">
        <name>Zn(2+)</name>
        <dbReference type="ChEBI" id="CHEBI:29105"/>
    </cofactor>
    <text evidence="1">Binds 2 Zn(2+) ions per subunit.</text>
</comment>
<comment type="subunit">
    <text evidence="1">The RNAP catalytic core consists of 2 alpha, 1 beta, 1 beta' and 1 omega subunit. When a sigma factor is associated with the core the holoenzyme is formed, which can initiate transcription.</text>
</comment>
<comment type="similarity">
    <text evidence="1">Belongs to the RNA polymerase beta' chain family.</text>
</comment>
<dbReference type="EC" id="2.7.7.6" evidence="1"/>
<dbReference type="EMBL" id="CP001100">
    <property type="protein sequence ID" value="ACF13643.1"/>
    <property type="molecule type" value="Genomic_DNA"/>
</dbReference>
<dbReference type="RefSeq" id="WP_012499727.1">
    <property type="nucleotide sequence ID" value="NC_011026.1"/>
</dbReference>
<dbReference type="SMR" id="B3QYL5"/>
<dbReference type="STRING" id="517418.Ctha_1179"/>
<dbReference type="KEGG" id="cts:Ctha_1179"/>
<dbReference type="eggNOG" id="COG0086">
    <property type="taxonomic scope" value="Bacteria"/>
</dbReference>
<dbReference type="HOGENOM" id="CLU_000524_3_1_10"/>
<dbReference type="OrthoDB" id="9815296at2"/>
<dbReference type="Proteomes" id="UP000001208">
    <property type="component" value="Chromosome"/>
</dbReference>
<dbReference type="GO" id="GO:0000428">
    <property type="term" value="C:DNA-directed RNA polymerase complex"/>
    <property type="evidence" value="ECO:0007669"/>
    <property type="project" value="UniProtKB-KW"/>
</dbReference>
<dbReference type="GO" id="GO:0003677">
    <property type="term" value="F:DNA binding"/>
    <property type="evidence" value="ECO:0007669"/>
    <property type="project" value="UniProtKB-UniRule"/>
</dbReference>
<dbReference type="GO" id="GO:0003899">
    <property type="term" value="F:DNA-directed RNA polymerase activity"/>
    <property type="evidence" value="ECO:0007669"/>
    <property type="project" value="UniProtKB-UniRule"/>
</dbReference>
<dbReference type="GO" id="GO:0000287">
    <property type="term" value="F:magnesium ion binding"/>
    <property type="evidence" value="ECO:0007669"/>
    <property type="project" value="UniProtKB-UniRule"/>
</dbReference>
<dbReference type="GO" id="GO:0008270">
    <property type="term" value="F:zinc ion binding"/>
    <property type="evidence" value="ECO:0007669"/>
    <property type="project" value="UniProtKB-UniRule"/>
</dbReference>
<dbReference type="GO" id="GO:0006351">
    <property type="term" value="P:DNA-templated transcription"/>
    <property type="evidence" value="ECO:0007669"/>
    <property type="project" value="UniProtKB-UniRule"/>
</dbReference>
<dbReference type="CDD" id="cd02655">
    <property type="entry name" value="RNAP_beta'_C"/>
    <property type="match status" value="1"/>
</dbReference>
<dbReference type="CDD" id="cd01609">
    <property type="entry name" value="RNAP_beta'_N"/>
    <property type="match status" value="1"/>
</dbReference>
<dbReference type="FunFam" id="1.10.150.390:FF:000002">
    <property type="entry name" value="DNA-directed RNA polymerase subunit beta"/>
    <property type="match status" value="1"/>
</dbReference>
<dbReference type="Gene3D" id="1.10.132.30">
    <property type="match status" value="1"/>
</dbReference>
<dbReference type="Gene3D" id="1.10.150.390">
    <property type="match status" value="1"/>
</dbReference>
<dbReference type="Gene3D" id="1.10.1790.20">
    <property type="match status" value="1"/>
</dbReference>
<dbReference type="Gene3D" id="1.10.40.90">
    <property type="match status" value="1"/>
</dbReference>
<dbReference type="Gene3D" id="2.40.40.20">
    <property type="match status" value="1"/>
</dbReference>
<dbReference type="Gene3D" id="2.40.50.100">
    <property type="match status" value="3"/>
</dbReference>
<dbReference type="Gene3D" id="4.10.860.120">
    <property type="entry name" value="RNA polymerase II, clamp domain"/>
    <property type="match status" value="1"/>
</dbReference>
<dbReference type="Gene3D" id="1.10.274.100">
    <property type="entry name" value="RNA polymerase Rpb1, domain 3"/>
    <property type="match status" value="1"/>
</dbReference>
<dbReference type="HAMAP" id="MF_01322">
    <property type="entry name" value="RNApol_bact_RpoC"/>
    <property type="match status" value="1"/>
</dbReference>
<dbReference type="InterPro" id="IPR045867">
    <property type="entry name" value="DNA-dir_RpoC_beta_prime"/>
</dbReference>
<dbReference type="InterPro" id="IPR012754">
    <property type="entry name" value="DNA-dir_RpoC_beta_prime_bact"/>
</dbReference>
<dbReference type="InterPro" id="IPR000722">
    <property type="entry name" value="RNA_pol_asu"/>
</dbReference>
<dbReference type="InterPro" id="IPR006592">
    <property type="entry name" value="RNA_pol_N"/>
</dbReference>
<dbReference type="InterPro" id="IPR007080">
    <property type="entry name" value="RNA_pol_Rpb1_1"/>
</dbReference>
<dbReference type="InterPro" id="IPR007066">
    <property type="entry name" value="RNA_pol_Rpb1_3"/>
</dbReference>
<dbReference type="InterPro" id="IPR042102">
    <property type="entry name" value="RNA_pol_Rpb1_3_sf"/>
</dbReference>
<dbReference type="InterPro" id="IPR007083">
    <property type="entry name" value="RNA_pol_Rpb1_4"/>
</dbReference>
<dbReference type="InterPro" id="IPR007081">
    <property type="entry name" value="RNA_pol_Rpb1_5"/>
</dbReference>
<dbReference type="InterPro" id="IPR044893">
    <property type="entry name" value="RNA_pol_Rpb1_clamp_domain"/>
</dbReference>
<dbReference type="InterPro" id="IPR038120">
    <property type="entry name" value="Rpb1_funnel_sf"/>
</dbReference>
<dbReference type="NCBIfam" id="TIGR02386">
    <property type="entry name" value="rpoC_TIGR"/>
    <property type="match status" value="1"/>
</dbReference>
<dbReference type="PANTHER" id="PTHR19376">
    <property type="entry name" value="DNA-DIRECTED RNA POLYMERASE"/>
    <property type="match status" value="1"/>
</dbReference>
<dbReference type="PANTHER" id="PTHR19376:SF54">
    <property type="entry name" value="DNA-DIRECTED RNA POLYMERASE SUBUNIT BETA"/>
    <property type="match status" value="1"/>
</dbReference>
<dbReference type="Pfam" id="PF04997">
    <property type="entry name" value="RNA_pol_Rpb1_1"/>
    <property type="match status" value="1"/>
</dbReference>
<dbReference type="Pfam" id="PF00623">
    <property type="entry name" value="RNA_pol_Rpb1_2"/>
    <property type="match status" value="2"/>
</dbReference>
<dbReference type="Pfam" id="PF04983">
    <property type="entry name" value="RNA_pol_Rpb1_3"/>
    <property type="match status" value="1"/>
</dbReference>
<dbReference type="Pfam" id="PF05000">
    <property type="entry name" value="RNA_pol_Rpb1_4"/>
    <property type="match status" value="1"/>
</dbReference>
<dbReference type="Pfam" id="PF04998">
    <property type="entry name" value="RNA_pol_Rpb1_5"/>
    <property type="match status" value="1"/>
</dbReference>
<dbReference type="SMART" id="SM00663">
    <property type="entry name" value="RPOLA_N"/>
    <property type="match status" value="1"/>
</dbReference>
<dbReference type="SUPFAM" id="SSF64484">
    <property type="entry name" value="beta and beta-prime subunits of DNA dependent RNA-polymerase"/>
    <property type="match status" value="1"/>
</dbReference>
<evidence type="ECO:0000255" key="1">
    <source>
        <dbReference type="HAMAP-Rule" id="MF_01322"/>
    </source>
</evidence>
<evidence type="ECO:0000256" key="2">
    <source>
        <dbReference type="SAM" id="MobiDB-lite"/>
    </source>
</evidence>